<comment type="function">
    <text evidence="1">Converts heme B (protoheme IX) to heme O by substitution of the vinyl group on carbon 2 of heme B porphyrin ring with a hydroxyethyl farnesyl side group.</text>
</comment>
<comment type="catalytic activity">
    <reaction evidence="1">
        <text>heme b + (2E,6E)-farnesyl diphosphate + H2O = Fe(II)-heme o + diphosphate</text>
        <dbReference type="Rhea" id="RHEA:28070"/>
        <dbReference type="ChEBI" id="CHEBI:15377"/>
        <dbReference type="ChEBI" id="CHEBI:33019"/>
        <dbReference type="ChEBI" id="CHEBI:60344"/>
        <dbReference type="ChEBI" id="CHEBI:60530"/>
        <dbReference type="ChEBI" id="CHEBI:175763"/>
        <dbReference type="EC" id="2.5.1.141"/>
    </reaction>
</comment>
<comment type="pathway">
    <text evidence="1">Porphyrin-containing compound metabolism; heme O biosynthesis; heme O from protoheme: step 1/1.</text>
</comment>
<comment type="subcellular location">
    <subcellularLocation>
        <location evidence="1">Cell inner membrane</location>
        <topology evidence="1">Multi-pass membrane protein</topology>
    </subcellularLocation>
</comment>
<comment type="miscellaneous">
    <text evidence="1">Carbon 2 of the heme B porphyrin ring is defined according to the Fischer nomenclature.</text>
</comment>
<comment type="similarity">
    <text evidence="1">Belongs to the UbiA prenyltransferase family. Protoheme IX farnesyltransferase subfamily.</text>
</comment>
<comment type="sequence caution" evidence="2">
    <conflict type="erroneous initiation">
        <sequence resource="EMBL-CDS" id="ABP41165"/>
    </conflict>
</comment>
<gene>
    <name evidence="1" type="primary">cyoE</name>
    <name type="ordered locus">YPDSF_2803</name>
</gene>
<reference key="1">
    <citation type="submission" date="2007-02" db="EMBL/GenBank/DDBJ databases">
        <title>Complete sequence of chromosome of Yersinia pestis Pestoides F.</title>
        <authorList>
            <consortium name="US DOE Joint Genome Institute"/>
            <person name="Copeland A."/>
            <person name="Lucas S."/>
            <person name="Lapidus A."/>
            <person name="Barry K."/>
            <person name="Detter J.C."/>
            <person name="Glavina del Rio T."/>
            <person name="Hammon N."/>
            <person name="Israni S."/>
            <person name="Dalin E."/>
            <person name="Tice H."/>
            <person name="Pitluck S."/>
            <person name="Di Bartolo G."/>
            <person name="Chain P."/>
            <person name="Malfatti S."/>
            <person name="Shin M."/>
            <person name="Vergez L."/>
            <person name="Schmutz J."/>
            <person name="Larimer F."/>
            <person name="Land M."/>
            <person name="Hauser L."/>
            <person name="Worsham P."/>
            <person name="Chu M."/>
            <person name="Bearden S."/>
            <person name="Garcia E."/>
            <person name="Richardson P."/>
        </authorList>
    </citation>
    <scope>NUCLEOTIDE SEQUENCE [LARGE SCALE GENOMIC DNA]</scope>
    <source>
        <strain>Pestoides F</strain>
    </source>
</reference>
<sequence length="296" mass="32179">MMIKQYLQVTKPGIIFGNLISVIGGFLLASKGDIDYPLFLSTLLGVSLVVASGCVFNNYIDRDIDKIMERTKNRVLVKGLIDPKVSLIYASVLGIAGMLLLYVAANALAMMLAVIGFVIYVGVYSLYMKRKSVYGTLIGSLSGAAPPVIGYCAVTGQFDTGALILLLIFSLWQMPHSYAIAIFRFKDYQAANIPVLPVIKGISVTKNHITLYILAFMVATLMLTLSGYAGYKYLVVAAAVSVWWLGMALRGYKATNDSVWARKLFVFSIIAITSLSVMMSVDFNVHSSAVLLTYAG</sequence>
<dbReference type="EC" id="2.5.1.141" evidence="1"/>
<dbReference type="EMBL" id="CP000668">
    <property type="protein sequence ID" value="ABP41165.1"/>
    <property type="status" value="ALT_INIT"/>
    <property type="molecule type" value="Genomic_DNA"/>
</dbReference>
<dbReference type="SMR" id="A4TPF3"/>
<dbReference type="KEGG" id="ypp:YPDSF_2803"/>
<dbReference type="UniPathway" id="UPA00834">
    <property type="reaction ID" value="UER00712"/>
</dbReference>
<dbReference type="GO" id="GO:0005886">
    <property type="term" value="C:plasma membrane"/>
    <property type="evidence" value="ECO:0007669"/>
    <property type="project" value="UniProtKB-SubCell"/>
</dbReference>
<dbReference type="GO" id="GO:0008495">
    <property type="term" value="F:protoheme IX farnesyltransferase activity"/>
    <property type="evidence" value="ECO:0007669"/>
    <property type="project" value="UniProtKB-UniRule"/>
</dbReference>
<dbReference type="GO" id="GO:0048034">
    <property type="term" value="P:heme O biosynthetic process"/>
    <property type="evidence" value="ECO:0007669"/>
    <property type="project" value="UniProtKB-UniRule"/>
</dbReference>
<dbReference type="CDD" id="cd13957">
    <property type="entry name" value="PT_UbiA_Cox10"/>
    <property type="match status" value="1"/>
</dbReference>
<dbReference type="FunFam" id="1.10.357.140:FF:000001">
    <property type="entry name" value="Protoheme IX farnesyltransferase"/>
    <property type="match status" value="1"/>
</dbReference>
<dbReference type="Gene3D" id="1.10.357.140">
    <property type="entry name" value="UbiA prenyltransferase"/>
    <property type="match status" value="1"/>
</dbReference>
<dbReference type="HAMAP" id="MF_00154">
    <property type="entry name" value="CyoE_CtaB"/>
    <property type="match status" value="1"/>
</dbReference>
<dbReference type="InterPro" id="IPR006369">
    <property type="entry name" value="Protohaem_IX_farnesylTrfase"/>
</dbReference>
<dbReference type="InterPro" id="IPR000537">
    <property type="entry name" value="UbiA_prenyltransferase"/>
</dbReference>
<dbReference type="InterPro" id="IPR030470">
    <property type="entry name" value="UbiA_prenylTrfase_CS"/>
</dbReference>
<dbReference type="InterPro" id="IPR044878">
    <property type="entry name" value="UbiA_sf"/>
</dbReference>
<dbReference type="NCBIfam" id="TIGR01473">
    <property type="entry name" value="cyoE_ctaB"/>
    <property type="match status" value="1"/>
</dbReference>
<dbReference type="NCBIfam" id="NF003348">
    <property type="entry name" value="PRK04375.1-1"/>
    <property type="match status" value="1"/>
</dbReference>
<dbReference type="PANTHER" id="PTHR43448">
    <property type="entry name" value="PROTOHEME IX FARNESYLTRANSFERASE, MITOCHONDRIAL"/>
    <property type="match status" value="1"/>
</dbReference>
<dbReference type="PANTHER" id="PTHR43448:SF2">
    <property type="entry name" value="PROTOHEME IX FARNESYLTRANSFERASE, MITOCHONDRIAL"/>
    <property type="match status" value="1"/>
</dbReference>
<dbReference type="Pfam" id="PF01040">
    <property type="entry name" value="UbiA"/>
    <property type="match status" value="1"/>
</dbReference>
<dbReference type="PROSITE" id="PS00943">
    <property type="entry name" value="UBIA"/>
    <property type="match status" value="1"/>
</dbReference>
<proteinExistence type="inferred from homology"/>
<feature type="chain" id="PRO_0000326981" description="Protoheme IX farnesyltransferase">
    <location>
        <begin position="1"/>
        <end position="296"/>
    </location>
</feature>
<feature type="transmembrane region" description="Helical" evidence="1">
    <location>
        <begin position="9"/>
        <end position="29"/>
    </location>
</feature>
<feature type="transmembrane region" description="Helical" evidence="1">
    <location>
        <begin position="36"/>
        <end position="56"/>
    </location>
</feature>
<feature type="transmembrane region" description="Helical" evidence="1">
    <location>
        <begin position="75"/>
        <end position="95"/>
    </location>
</feature>
<feature type="transmembrane region" description="Helical" evidence="1">
    <location>
        <begin position="99"/>
        <end position="119"/>
    </location>
</feature>
<feature type="transmembrane region" description="Helical" evidence="1">
    <location>
        <begin position="133"/>
        <end position="153"/>
    </location>
</feature>
<feature type="transmembrane region" description="Helical" evidence="1">
    <location>
        <begin position="163"/>
        <end position="183"/>
    </location>
</feature>
<feature type="transmembrane region" description="Helical" evidence="1">
    <location>
        <begin position="209"/>
        <end position="229"/>
    </location>
</feature>
<feature type="transmembrane region" description="Helical" evidence="1">
    <location>
        <begin position="234"/>
        <end position="254"/>
    </location>
</feature>
<feature type="transmembrane region" description="Helical" evidence="1">
    <location>
        <begin position="265"/>
        <end position="285"/>
    </location>
</feature>
<keyword id="KW-0997">Cell inner membrane</keyword>
<keyword id="KW-1003">Cell membrane</keyword>
<keyword id="KW-0350">Heme biosynthesis</keyword>
<keyword id="KW-0472">Membrane</keyword>
<keyword id="KW-0808">Transferase</keyword>
<keyword id="KW-0812">Transmembrane</keyword>
<keyword id="KW-1133">Transmembrane helix</keyword>
<accession>A4TPF3</accession>
<organism>
    <name type="scientific">Yersinia pestis (strain Pestoides F)</name>
    <dbReference type="NCBI Taxonomy" id="386656"/>
    <lineage>
        <taxon>Bacteria</taxon>
        <taxon>Pseudomonadati</taxon>
        <taxon>Pseudomonadota</taxon>
        <taxon>Gammaproteobacteria</taxon>
        <taxon>Enterobacterales</taxon>
        <taxon>Yersiniaceae</taxon>
        <taxon>Yersinia</taxon>
    </lineage>
</organism>
<evidence type="ECO:0000255" key="1">
    <source>
        <dbReference type="HAMAP-Rule" id="MF_00154"/>
    </source>
</evidence>
<evidence type="ECO:0000305" key="2"/>
<protein>
    <recommendedName>
        <fullName evidence="1">Protoheme IX farnesyltransferase</fullName>
        <ecNumber evidence="1">2.5.1.141</ecNumber>
    </recommendedName>
    <alternativeName>
        <fullName evidence="1">Heme B farnesyltransferase</fullName>
    </alternativeName>
    <alternativeName>
        <fullName evidence="1">Heme O synthase</fullName>
    </alternativeName>
</protein>
<name>CYOE_YERPP</name>